<accession>Q4KLV2</accession>
<accession>Q6DCF4</accession>
<name>LRC42_XENLA</name>
<proteinExistence type="evidence at transcript level"/>
<evidence type="ECO:0000256" key="1">
    <source>
        <dbReference type="SAM" id="MobiDB-lite"/>
    </source>
</evidence>
<evidence type="ECO:0000305" key="2"/>
<dbReference type="EMBL" id="BC078092">
    <property type="protein sequence ID" value="AAH78092.1"/>
    <property type="status" value="ALT_INIT"/>
    <property type="molecule type" value="mRNA"/>
</dbReference>
<dbReference type="EMBL" id="BC098987">
    <property type="protein sequence ID" value="AAH98987.1"/>
    <property type="status" value="ALT_INIT"/>
    <property type="molecule type" value="mRNA"/>
</dbReference>
<dbReference type="AGR" id="Xenbase:XB-GENE-5737799"/>
<dbReference type="Xenbase" id="XB-GENE-5737799">
    <property type="gene designation" value="lrrc42.L"/>
</dbReference>
<dbReference type="OrthoDB" id="120976at2759"/>
<dbReference type="Proteomes" id="UP000186698">
    <property type="component" value="Unplaced"/>
</dbReference>
<dbReference type="Gene3D" id="3.80.10.10">
    <property type="entry name" value="Ribonuclease Inhibitor"/>
    <property type="match status" value="1"/>
</dbReference>
<dbReference type="InterPro" id="IPR001611">
    <property type="entry name" value="Leu-rich_rpt"/>
</dbReference>
<dbReference type="InterPro" id="IPR032675">
    <property type="entry name" value="LRR_dom_sf"/>
</dbReference>
<dbReference type="InterPro" id="IPR039631">
    <property type="entry name" value="LRRC42"/>
</dbReference>
<dbReference type="PANTHER" id="PTHR31994">
    <property type="entry name" value="LEUCINE-RICH REPEAT-CONTAINING PROTEIN 42"/>
    <property type="match status" value="1"/>
</dbReference>
<dbReference type="PANTHER" id="PTHR31994:SF3">
    <property type="entry name" value="LEUCINE-RICH REPEAT-CONTAINING PROTEIN 42"/>
    <property type="match status" value="1"/>
</dbReference>
<dbReference type="Pfam" id="PF13516">
    <property type="entry name" value="LRR_6"/>
    <property type="match status" value="3"/>
</dbReference>
<dbReference type="SUPFAM" id="SSF52047">
    <property type="entry name" value="RNI-like"/>
    <property type="match status" value="1"/>
</dbReference>
<organism>
    <name type="scientific">Xenopus laevis</name>
    <name type="common">African clawed frog</name>
    <dbReference type="NCBI Taxonomy" id="8355"/>
    <lineage>
        <taxon>Eukaryota</taxon>
        <taxon>Metazoa</taxon>
        <taxon>Chordata</taxon>
        <taxon>Craniata</taxon>
        <taxon>Vertebrata</taxon>
        <taxon>Euteleostomi</taxon>
        <taxon>Amphibia</taxon>
        <taxon>Batrachia</taxon>
        <taxon>Anura</taxon>
        <taxon>Pipoidea</taxon>
        <taxon>Pipidae</taxon>
        <taxon>Xenopodinae</taxon>
        <taxon>Xenopus</taxon>
        <taxon>Xenopus</taxon>
    </lineage>
</organism>
<keyword id="KW-0433">Leucine-rich repeat</keyword>
<keyword id="KW-1185">Reference proteome</keyword>
<keyword id="KW-0677">Repeat</keyword>
<comment type="similarity">
    <text evidence="2">Belongs to the LRRC42 family.</text>
</comment>
<comment type="sequence caution" evidence="2">
    <conflict type="erroneous initiation">
        <sequence resource="EMBL-CDS" id="AAH78092"/>
    </conflict>
</comment>
<comment type="sequence caution" evidence="2">
    <conflict type="erroneous initiation">
        <sequence resource="EMBL-CDS" id="AAH98987"/>
    </conflict>
</comment>
<protein>
    <recommendedName>
        <fullName>Leucine-rich repeat-containing protein 42</fullName>
    </recommendedName>
</protein>
<reference key="1">
    <citation type="submission" date="2005-07" db="EMBL/GenBank/DDBJ databases">
        <authorList>
            <consortium name="NIH - Xenopus Gene Collection (XGC) project"/>
        </authorList>
    </citation>
    <scope>NUCLEOTIDE SEQUENCE [LARGE SCALE MRNA]</scope>
    <source>
        <tissue>Embryo</tissue>
    </source>
</reference>
<gene>
    <name type="primary">lrrc42</name>
</gene>
<feature type="chain" id="PRO_0000360042" description="Leucine-rich repeat-containing protein 42">
    <location>
        <begin position="1"/>
        <end position="417"/>
    </location>
</feature>
<feature type="repeat" description="LRR 1">
    <location>
        <begin position="167"/>
        <end position="188"/>
    </location>
</feature>
<feature type="repeat" description="LRR 2">
    <location>
        <begin position="195"/>
        <end position="215"/>
    </location>
</feature>
<feature type="repeat" description="LRR 3">
    <location>
        <begin position="227"/>
        <end position="248"/>
    </location>
</feature>
<feature type="repeat" description="LRR 4">
    <location>
        <begin position="252"/>
        <end position="273"/>
    </location>
</feature>
<feature type="region of interest" description="Disordered" evidence="1">
    <location>
        <begin position="360"/>
        <end position="390"/>
    </location>
</feature>
<feature type="compositionally biased region" description="Basic and acidic residues" evidence="1">
    <location>
        <begin position="362"/>
        <end position="375"/>
    </location>
</feature>
<feature type="sequence conflict" description="In Ref. 1; AAH78092." evidence="2" ref="1">
    <original>C</original>
    <variation>S</variation>
    <location>
        <position position="245"/>
    </location>
</feature>
<feature type="sequence conflict" description="In Ref. 1; AAH78092." evidence="2" ref="1">
    <original>S</original>
    <variation>L</variation>
    <location>
        <position position="323"/>
    </location>
</feature>
<feature type="sequence conflict" description="In Ref. 1; AAH78092." evidence="2" ref="1">
    <original>D</original>
    <variation>V</variation>
    <location>
        <position position="370"/>
    </location>
</feature>
<sequence length="417" mass="47113">MFQCLEPERNEEAGLVYVREKGKLSVIGSHSSELRTRPCRLFSKGFSVELCGKQEDTSKHRQKPFIFTYTKEGSLRYSAKSLFTLTLELISDNIQYVDSLMGFPDQIAEKLFTAAEAKQKFYAPCSGLMALRKFTEAYGDLVLSSLCLRGRYLLVSERLEEIKSFQCLHSLDLSCCKLGDEHELLAHLSSDPMSSLTELYLKDNCLSNIGIQKMTASVRVLGRGLDKLKVLDLSSNPGITDRGVCFLFGFKLLKFLDLSDTSIQDPSGTLKKIETKIGLVLSKKSIFQFDHTNCRTQGWAEQLLEQWESYILSAIKPKDTLKSRNAAQQFYGKEKKQIPSDSGTFTLPAPVVQKQTHLQFFRPKEQKDPDSSNSEKRRHSTKRTGADCVQEDCSIAPSTKRPRVTLTSSDWDLLNSY</sequence>